<dbReference type="EC" id="2.3.1.46" evidence="1"/>
<dbReference type="EMBL" id="CU928158">
    <property type="protein sequence ID" value="CAQ91489.1"/>
    <property type="molecule type" value="Genomic_DNA"/>
</dbReference>
<dbReference type="RefSeq" id="WP_001122791.1">
    <property type="nucleotide sequence ID" value="NC_011740.1"/>
</dbReference>
<dbReference type="SMR" id="B7LKA1"/>
<dbReference type="GeneID" id="75059346"/>
<dbReference type="KEGG" id="efe:EFER_4066"/>
<dbReference type="HOGENOM" id="CLU_057851_0_1_6"/>
<dbReference type="OrthoDB" id="9772423at2"/>
<dbReference type="UniPathway" id="UPA00051">
    <property type="reaction ID" value="UER00075"/>
</dbReference>
<dbReference type="Proteomes" id="UP000000745">
    <property type="component" value="Chromosome"/>
</dbReference>
<dbReference type="GO" id="GO:0005737">
    <property type="term" value="C:cytoplasm"/>
    <property type="evidence" value="ECO:0007669"/>
    <property type="project" value="UniProtKB-SubCell"/>
</dbReference>
<dbReference type="GO" id="GO:0004414">
    <property type="term" value="F:homoserine O-acetyltransferase activity"/>
    <property type="evidence" value="ECO:0007669"/>
    <property type="project" value="UniProtKB-UniRule"/>
</dbReference>
<dbReference type="GO" id="GO:0008899">
    <property type="term" value="F:homoserine O-succinyltransferase activity"/>
    <property type="evidence" value="ECO:0007669"/>
    <property type="project" value="UniProtKB-EC"/>
</dbReference>
<dbReference type="GO" id="GO:0019281">
    <property type="term" value="P:L-methionine biosynthetic process from homoserine via O-succinyl-L-homoserine and cystathionine"/>
    <property type="evidence" value="ECO:0007669"/>
    <property type="project" value="InterPro"/>
</dbReference>
<dbReference type="CDD" id="cd03131">
    <property type="entry name" value="GATase1_HTS"/>
    <property type="match status" value="1"/>
</dbReference>
<dbReference type="FunFam" id="3.40.50.880:FF:000004">
    <property type="entry name" value="Homoserine O-succinyltransferase"/>
    <property type="match status" value="1"/>
</dbReference>
<dbReference type="Gene3D" id="3.40.50.880">
    <property type="match status" value="1"/>
</dbReference>
<dbReference type="HAMAP" id="MF_00295">
    <property type="entry name" value="MetA_acyltransf"/>
    <property type="match status" value="1"/>
</dbReference>
<dbReference type="InterPro" id="IPR029062">
    <property type="entry name" value="Class_I_gatase-like"/>
</dbReference>
<dbReference type="InterPro" id="IPR005697">
    <property type="entry name" value="HST_MetA"/>
</dbReference>
<dbReference type="InterPro" id="IPR033752">
    <property type="entry name" value="MetA_family"/>
</dbReference>
<dbReference type="NCBIfam" id="TIGR01001">
    <property type="entry name" value="metA"/>
    <property type="match status" value="1"/>
</dbReference>
<dbReference type="PANTHER" id="PTHR20919">
    <property type="entry name" value="HOMOSERINE O-SUCCINYLTRANSFERASE"/>
    <property type="match status" value="1"/>
</dbReference>
<dbReference type="PANTHER" id="PTHR20919:SF0">
    <property type="entry name" value="HOMOSERINE O-SUCCINYLTRANSFERASE"/>
    <property type="match status" value="1"/>
</dbReference>
<dbReference type="Pfam" id="PF04204">
    <property type="entry name" value="HTS"/>
    <property type="match status" value="1"/>
</dbReference>
<dbReference type="PIRSF" id="PIRSF000450">
    <property type="entry name" value="H_ser_succinyltr"/>
    <property type="match status" value="1"/>
</dbReference>
<dbReference type="SUPFAM" id="SSF52317">
    <property type="entry name" value="Class I glutamine amidotransferase-like"/>
    <property type="match status" value="1"/>
</dbReference>
<accession>B7LKA1</accession>
<evidence type="ECO:0000255" key="1">
    <source>
        <dbReference type="HAMAP-Rule" id="MF_00295"/>
    </source>
</evidence>
<reference key="1">
    <citation type="journal article" date="2009" name="PLoS Genet.">
        <title>Organised genome dynamics in the Escherichia coli species results in highly diverse adaptive paths.</title>
        <authorList>
            <person name="Touchon M."/>
            <person name="Hoede C."/>
            <person name="Tenaillon O."/>
            <person name="Barbe V."/>
            <person name="Baeriswyl S."/>
            <person name="Bidet P."/>
            <person name="Bingen E."/>
            <person name="Bonacorsi S."/>
            <person name="Bouchier C."/>
            <person name="Bouvet O."/>
            <person name="Calteau A."/>
            <person name="Chiapello H."/>
            <person name="Clermont O."/>
            <person name="Cruveiller S."/>
            <person name="Danchin A."/>
            <person name="Diard M."/>
            <person name="Dossat C."/>
            <person name="Karoui M.E."/>
            <person name="Frapy E."/>
            <person name="Garry L."/>
            <person name="Ghigo J.M."/>
            <person name="Gilles A.M."/>
            <person name="Johnson J."/>
            <person name="Le Bouguenec C."/>
            <person name="Lescat M."/>
            <person name="Mangenot S."/>
            <person name="Martinez-Jehanne V."/>
            <person name="Matic I."/>
            <person name="Nassif X."/>
            <person name="Oztas S."/>
            <person name="Petit M.A."/>
            <person name="Pichon C."/>
            <person name="Rouy Z."/>
            <person name="Ruf C.S."/>
            <person name="Schneider D."/>
            <person name="Tourret J."/>
            <person name="Vacherie B."/>
            <person name="Vallenet D."/>
            <person name="Medigue C."/>
            <person name="Rocha E.P.C."/>
            <person name="Denamur E."/>
        </authorList>
    </citation>
    <scope>NUCLEOTIDE SEQUENCE [LARGE SCALE GENOMIC DNA]</scope>
    <source>
        <strain>ATCC 35469 / DSM 13698 / BCRC 15582 / CCUG 18766 / IAM 14443 / JCM 21226 / LMG 7866 / NBRC 102419 / NCTC 12128 / CDC 0568-73</strain>
    </source>
</reference>
<name>METAS_ESCF3</name>
<gene>
    <name evidence="1" type="primary">metAS</name>
    <name type="ordered locus">EFER_4066</name>
</gene>
<keyword id="KW-0012">Acyltransferase</keyword>
<keyword id="KW-0028">Amino-acid biosynthesis</keyword>
<keyword id="KW-0963">Cytoplasm</keyword>
<keyword id="KW-0486">Methionine biosynthesis</keyword>
<keyword id="KW-0808">Transferase</keyword>
<comment type="function">
    <text evidence="1">Transfers a succinyl group from succinyl-CoA to L-homoserine, forming succinyl-L-homoserine.</text>
</comment>
<comment type="catalytic activity">
    <reaction evidence="1">
        <text>L-homoserine + succinyl-CoA = O-succinyl-L-homoserine + CoA</text>
        <dbReference type="Rhea" id="RHEA:22008"/>
        <dbReference type="ChEBI" id="CHEBI:57287"/>
        <dbReference type="ChEBI" id="CHEBI:57292"/>
        <dbReference type="ChEBI" id="CHEBI:57476"/>
        <dbReference type="ChEBI" id="CHEBI:57661"/>
        <dbReference type="EC" id="2.3.1.46"/>
    </reaction>
</comment>
<comment type="pathway">
    <text evidence="1">Amino-acid biosynthesis; L-methionine biosynthesis via de novo pathway; O-succinyl-L-homoserine from L-homoserine: step 1/1.</text>
</comment>
<comment type="subunit">
    <text evidence="1">Homodimer.</text>
</comment>
<comment type="subcellular location">
    <subcellularLocation>
        <location evidence="1">Cytoplasm</location>
    </subcellularLocation>
</comment>
<comment type="similarity">
    <text evidence="1">Belongs to the MetA family.</text>
</comment>
<protein>
    <recommendedName>
        <fullName evidence="1">Homoserine O-succinyltransferase</fullName>
        <shortName evidence="1">HST</shortName>
        <ecNumber evidence="1">2.3.1.46</ecNumber>
    </recommendedName>
    <alternativeName>
        <fullName evidence="1">Homoserine transsuccinylase</fullName>
        <shortName evidence="1">HTS</shortName>
    </alternativeName>
</protein>
<feature type="chain" id="PRO_1000119453" description="Homoserine O-succinyltransferase">
    <location>
        <begin position="1"/>
        <end position="309"/>
    </location>
</feature>
<feature type="active site" description="Acyl-thioester intermediate" evidence="1">
    <location>
        <position position="142"/>
    </location>
</feature>
<feature type="active site" description="Proton acceptor" evidence="1">
    <location>
        <position position="235"/>
    </location>
</feature>
<feature type="active site" evidence="1">
    <location>
        <position position="237"/>
    </location>
</feature>
<feature type="binding site" evidence="1">
    <location>
        <position position="163"/>
    </location>
    <ligand>
        <name>substrate</name>
    </ligand>
</feature>
<feature type="binding site" evidence="1">
    <location>
        <position position="192"/>
    </location>
    <ligand>
        <name>substrate</name>
    </ligand>
</feature>
<feature type="binding site" evidence="1">
    <location>
        <position position="249"/>
    </location>
    <ligand>
        <name>substrate</name>
    </ligand>
</feature>
<feature type="site" description="Important for acyl-CoA specificity" evidence="1">
    <location>
        <position position="111"/>
    </location>
</feature>
<feature type="site" description="Important for substrate specificity" evidence="1">
    <location>
        <position position="192"/>
    </location>
</feature>
<organism>
    <name type="scientific">Escherichia fergusonii (strain ATCC 35469 / DSM 13698 / CCUG 18766 / IAM 14443 / JCM 21226 / LMG 7866 / NBRC 102419 / NCTC 12128 / CDC 0568-73)</name>
    <dbReference type="NCBI Taxonomy" id="585054"/>
    <lineage>
        <taxon>Bacteria</taxon>
        <taxon>Pseudomonadati</taxon>
        <taxon>Pseudomonadota</taxon>
        <taxon>Gammaproteobacteria</taxon>
        <taxon>Enterobacterales</taxon>
        <taxon>Enterobacteriaceae</taxon>
        <taxon>Escherichia</taxon>
    </lineage>
</organism>
<sequence>MPIRVPDELPAVNFLREENVFVMTTSRASGQEIRPLKVLILNLMPKKIETENQFLRLLSNSPLQVDIQLLRIDSRESRNTPAEHLNNFYCNFEDIQEQNFDGLIVTGAPLGLVEFNDVAYWPQIKQVLEWSKDHVTSTLFVCWAVQAALNILYGIPKQTRTDKLSGVYEHHILHPHALLTRGFDDSFLAPHSRYADFPAALIRDYTDLEILAETEEGDAYLFASKDKRIAFVTGHPEYDAQTLAQEYFRDVEAGLNPDVPYNYFPHNDPQNTPRASWRSHGNLLFTNWLNYYVYQITPYDLRHMNPTLD</sequence>
<proteinExistence type="inferred from homology"/>